<protein>
    <recommendedName>
        <fullName evidence="5">4-amino-L-phenylalanyl-[CmlP-peptidyl-carrier-protein] 3-hydroxylase</fullName>
        <ecNumber evidence="1">1.14.99.65</ecNumber>
    </recommendedName>
</protein>
<accession>F2RB80</accession>
<proteinExistence type="evidence at protein level"/>
<dbReference type="EC" id="1.14.99.65" evidence="1"/>
<dbReference type="EMBL" id="FR845719">
    <property type="protein sequence ID" value="CCA54208.1"/>
    <property type="molecule type" value="Genomic_DNA"/>
</dbReference>
<dbReference type="RefSeq" id="WP_015032127.1">
    <property type="nucleotide sequence ID" value="NZ_CP029197.1"/>
</dbReference>
<dbReference type="PDB" id="4JO0">
    <property type="method" value="X-ray"/>
    <property type="resolution" value="2.17 A"/>
    <property type="chains" value="A=1-532"/>
</dbReference>
<dbReference type="PDB" id="5KIK">
    <property type="method" value="X-ray"/>
    <property type="resolution" value="2.20 A"/>
    <property type="chains" value="A=1-532"/>
</dbReference>
<dbReference type="PDB" id="5KIL">
    <property type="method" value="X-ray"/>
    <property type="resolution" value="2.72 A"/>
    <property type="chains" value="A=1-532"/>
</dbReference>
<dbReference type="PDBsum" id="4JO0"/>
<dbReference type="PDBsum" id="5KIK"/>
<dbReference type="PDBsum" id="5KIL"/>
<dbReference type="SMR" id="F2RB80"/>
<dbReference type="STRING" id="953739.SVEN_0921"/>
<dbReference type="KEGG" id="sve:SVEN_0921"/>
<dbReference type="PATRIC" id="fig|953739.5.peg.2967"/>
<dbReference type="eggNOG" id="COG2220">
    <property type="taxonomic scope" value="Bacteria"/>
</dbReference>
<dbReference type="HOGENOM" id="CLU_516704_0_0_11"/>
<dbReference type="OrthoDB" id="5657199at2"/>
<dbReference type="BioCyc" id="MetaCyc:MONOMER-20704"/>
<dbReference type="BRENDA" id="1.14.99.65">
    <property type="organism ID" value="6106"/>
</dbReference>
<dbReference type="EvolutionaryTrace" id="F2RB80"/>
<dbReference type="Proteomes" id="UP000006854">
    <property type="component" value="Chromosome"/>
</dbReference>
<dbReference type="GO" id="GO:0046872">
    <property type="term" value="F:metal ion binding"/>
    <property type="evidence" value="ECO:0007669"/>
    <property type="project" value="UniProtKB-KW"/>
</dbReference>
<dbReference type="GO" id="GO:0016491">
    <property type="term" value="F:oxidoreductase activity"/>
    <property type="evidence" value="ECO:0007669"/>
    <property type="project" value="UniProtKB-KW"/>
</dbReference>
<dbReference type="GO" id="GO:0017000">
    <property type="term" value="P:antibiotic biosynthetic process"/>
    <property type="evidence" value="ECO:0007669"/>
    <property type="project" value="UniProtKB-KW"/>
</dbReference>
<dbReference type="Gene3D" id="3.60.15.10">
    <property type="entry name" value="Ribonuclease Z/Hydroxyacylglutathione hydrolase-like"/>
    <property type="match status" value="1"/>
</dbReference>
<dbReference type="InterPro" id="IPR041141">
    <property type="entry name" value="CmlA_N"/>
</dbReference>
<dbReference type="InterPro" id="IPR001279">
    <property type="entry name" value="Metallo-B-lactamas"/>
</dbReference>
<dbReference type="InterPro" id="IPR036866">
    <property type="entry name" value="RibonucZ/Hydroxyglut_hydro"/>
</dbReference>
<dbReference type="InterPro" id="IPR050114">
    <property type="entry name" value="UPF0173_UPF0282_UlaG_hydrolase"/>
</dbReference>
<dbReference type="PANTHER" id="PTHR43546:SF3">
    <property type="entry name" value="UPF0173 METAL-DEPENDENT HYDROLASE MJ1163"/>
    <property type="match status" value="1"/>
</dbReference>
<dbReference type="PANTHER" id="PTHR43546">
    <property type="entry name" value="UPF0173 METAL-DEPENDENT HYDROLASE MJ1163-RELATED"/>
    <property type="match status" value="1"/>
</dbReference>
<dbReference type="Pfam" id="PF18456">
    <property type="entry name" value="CmlA_N"/>
    <property type="match status" value="1"/>
</dbReference>
<dbReference type="Pfam" id="PF12706">
    <property type="entry name" value="Lactamase_B_2"/>
    <property type="match status" value="1"/>
</dbReference>
<dbReference type="SUPFAM" id="SSF56281">
    <property type="entry name" value="Metallo-hydrolase/oxidoreductase"/>
    <property type="match status" value="1"/>
</dbReference>
<organism>
    <name type="scientific">Streptomyces venezuelae (strain ATCC 10712 / CBS 650.69 / DSM 40230 / JCM 4526 / NBRC 13096 / PD 04745)</name>
    <dbReference type="NCBI Taxonomy" id="953739"/>
    <lineage>
        <taxon>Bacteria</taxon>
        <taxon>Bacillati</taxon>
        <taxon>Actinomycetota</taxon>
        <taxon>Actinomycetes</taxon>
        <taxon>Kitasatosporales</taxon>
        <taxon>Streptomycetaceae</taxon>
        <taxon>Streptomyces</taxon>
    </lineage>
</organism>
<feature type="chain" id="PRO_0000447246" description="4-amino-L-phenylalanyl-[CmlP-peptidyl-carrier-protein] 3-hydroxylase">
    <location>
        <begin position="1"/>
        <end position="532"/>
    </location>
</feature>
<feature type="binding site" evidence="2 3">
    <location>
        <position position="305"/>
    </location>
    <ligand>
        <name>Fe cation</name>
        <dbReference type="ChEBI" id="CHEBI:24875"/>
        <label>1</label>
    </ligand>
</feature>
<feature type="binding site" evidence="2 3">
    <location>
        <position position="307"/>
    </location>
    <ligand>
        <name>Fe cation</name>
        <dbReference type="ChEBI" id="CHEBI:24875"/>
        <label>1</label>
    </ligand>
</feature>
<feature type="binding site" evidence="2 3">
    <location>
        <position position="309"/>
    </location>
    <ligand>
        <name>Fe cation</name>
        <dbReference type="ChEBI" id="CHEBI:24875"/>
        <label>2</label>
    </ligand>
</feature>
<feature type="binding site" evidence="2 3">
    <location>
        <position position="310"/>
    </location>
    <ligand>
        <name>Fe cation</name>
        <dbReference type="ChEBI" id="CHEBI:24875"/>
        <label>2</label>
    </ligand>
</feature>
<feature type="binding site" evidence="2 3">
    <location>
        <position position="377"/>
    </location>
    <ligand>
        <name>Fe cation</name>
        <dbReference type="ChEBI" id="CHEBI:24875"/>
        <label>1</label>
    </ligand>
</feature>
<feature type="binding site" evidence="2 3">
    <location>
        <position position="403"/>
    </location>
    <ligand>
        <name>Fe cation</name>
        <dbReference type="ChEBI" id="CHEBI:24875"/>
        <label>1</label>
    </ligand>
</feature>
<feature type="binding site" evidence="2 3">
    <location>
        <position position="403"/>
    </location>
    <ligand>
        <name>Fe cation</name>
        <dbReference type="ChEBI" id="CHEBI:24875"/>
        <label>2</label>
    </ligand>
</feature>
<feature type="mutagenesis site" description="Unable to generate the hydroxylated product." evidence="3">
    <original>E</original>
    <variation>D</variation>
    <location>
        <position position="377"/>
    </location>
</feature>
<feature type="mutagenesis site" description="Decrease in activity. Interacts strongly with the diiron cluster." evidence="2">
    <original>E</original>
    <variation>A</variation>
    <location>
        <position position="430"/>
    </location>
</feature>
<feature type="strand" evidence="10">
    <location>
        <begin position="3"/>
        <end position="5"/>
    </location>
</feature>
<feature type="strand" evidence="10">
    <location>
        <begin position="9"/>
        <end position="15"/>
    </location>
</feature>
<feature type="helix" evidence="10">
    <location>
        <begin position="22"/>
        <end position="24"/>
    </location>
</feature>
<feature type="helix" evidence="10">
    <location>
        <begin position="27"/>
        <end position="36"/>
    </location>
</feature>
<feature type="helix" evidence="10">
    <location>
        <begin position="38"/>
        <end position="47"/>
    </location>
</feature>
<feature type="helix" evidence="10">
    <location>
        <begin position="49"/>
        <end position="56"/>
    </location>
</feature>
<feature type="helix" evidence="10">
    <location>
        <begin position="59"/>
        <end position="61"/>
    </location>
</feature>
<feature type="helix" evidence="10">
    <location>
        <begin position="70"/>
        <end position="72"/>
    </location>
</feature>
<feature type="helix" evidence="10">
    <location>
        <begin position="73"/>
        <end position="82"/>
    </location>
</feature>
<feature type="helix" evidence="10">
    <location>
        <begin position="84"/>
        <end position="102"/>
    </location>
</feature>
<feature type="helix" evidence="10">
    <location>
        <begin position="105"/>
        <end position="107"/>
    </location>
</feature>
<feature type="strand" evidence="10">
    <location>
        <begin position="109"/>
        <end position="111"/>
    </location>
</feature>
<feature type="helix" evidence="10">
    <location>
        <begin position="114"/>
        <end position="118"/>
    </location>
</feature>
<feature type="turn" evidence="10">
    <location>
        <begin position="122"/>
        <end position="126"/>
    </location>
</feature>
<feature type="strand" evidence="10">
    <location>
        <begin position="127"/>
        <end position="132"/>
    </location>
</feature>
<feature type="strand" evidence="10">
    <location>
        <begin position="136"/>
        <end position="143"/>
    </location>
</feature>
<feature type="helix" evidence="10">
    <location>
        <begin position="145"/>
        <end position="150"/>
    </location>
</feature>
<feature type="helix" evidence="10">
    <location>
        <begin position="156"/>
        <end position="158"/>
    </location>
</feature>
<feature type="strand" evidence="10">
    <location>
        <begin position="159"/>
        <end position="165"/>
    </location>
</feature>
<feature type="strand" evidence="10">
    <location>
        <begin position="187"/>
        <end position="190"/>
    </location>
</feature>
<feature type="helix" evidence="10">
    <location>
        <begin position="196"/>
        <end position="203"/>
    </location>
</feature>
<feature type="helix" evidence="10">
    <location>
        <begin position="208"/>
        <end position="217"/>
    </location>
</feature>
<feature type="helix" evidence="10">
    <location>
        <begin position="222"/>
        <end position="229"/>
    </location>
</feature>
<feature type="strand" evidence="10">
    <location>
        <begin position="232"/>
        <end position="234"/>
    </location>
</feature>
<feature type="strand" evidence="10">
    <location>
        <begin position="252"/>
        <end position="257"/>
    </location>
</feature>
<feature type="strand" evidence="10">
    <location>
        <begin position="260"/>
        <end position="265"/>
    </location>
</feature>
<feature type="strand" evidence="10">
    <location>
        <begin position="268"/>
        <end position="273"/>
    </location>
</feature>
<feature type="helix" evidence="10">
    <location>
        <begin position="291"/>
        <end position="293"/>
    </location>
</feature>
<feature type="strand" evidence="10">
    <location>
        <begin position="298"/>
        <end position="302"/>
    </location>
</feature>
<feature type="strand" evidence="11">
    <location>
        <begin position="305"/>
        <end position="307"/>
    </location>
</feature>
<feature type="turn" evidence="10">
    <location>
        <begin position="308"/>
        <end position="310"/>
    </location>
</feature>
<feature type="helix" evidence="10">
    <location>
        <begin position="313"/>
        <end position="319"/>
    </location>
</feature>
<feature type="helix" evidence="10">
    <location>
        <begin position="320"/>
        <end position="322"/>
    </location>
</feature>
<feature type="strand" evidence="10">
    <location>
        <begin position="323"/>
        <end position="329"/>
    </location>
</feature>
<feature type="strand" evidence="10">
    <location>
        <begin position="335"/>
        <end position="338"/>
    </location>
</feature>
<feature type="helix" evidence="10">
    <location>
        <begin position="341"/>
        <end position="347"/>
    </location>
</feature>
<feature type="strand" evidence="10">
    <location>
        <begin position="353"/>
        <end position="356"/>
    </location>
</feature>
<feature type="strand" evidence="10">
    <location>
        <begin position="361"/>
        <end position="364"/>
    </location>
</feature>
<feature type="strand" evidence="10">
    <location>
        <begin position="367"/>
        <end position="373"/>
    </location>
</feature>
<feature type="strand" evidence="10">
    <location>
        <begin position="386"/>
        <end position="393"/>
    </location>
</feature>
<feature type="strand" evidence="10">
    <location>
        <begin position="396"/>
        <end position="400"/>
    </location>
</feature>
<feature type="helix" evidence="10">
    <location>
        <begin position="411"/>
        <end position="419"/>
    </location>
</feature>
<feature type="strand" evidence="10">
    <location>
        <begin position="423"/>
        <end position="428"/>
    </location>
</feature>
<feature type="helix" evidence="10">
    <location>
        <begin position="436"/>
        <end position="440"/>
    </location>
</feature>
<feature type="helix" evidence="10">
    <location>
        <begin position="441"/>
        <end position="443"/>
    </location>
</feature>
<feature type="strand" evidence="10">
    <location>
        <begin position="444"/>
        <end position="446"/>
    </location>
</feature>
<feature type="helix" evidence="10">
    <location>
        <begin position="450"/>
        <end position="455"/>
    </location>
</feature>
<feature type="helix" evidence="10">
    <location>
        <begin position="463"/>
        <end position="473"/>
    </location>
</feature>
<feature type="strand" evidence="10">
    <location>
        <begin position="476"/>
        <end position="481"/>
    </location>
</feature>
<feature type="helix" evidence="10">
    <location>
        <begin position="487"/>
        <end position="491"/>
    </location>
</feature>
<feature type="helix" evidence="10">
    <location>
        <begin position="502"/>
        <end position="516"/>
    </location>
</feature>
<feature type="strand" evidence="10">
    <location>
        <begin position="520"/>
        <end position="523"/>
    </location>
</feature>
<feature type="strand" evidence="10">
    <location>
        <begin position="528"/>
        <end position="530"/>
    </location>
</feature>
<comment type="function">
    <text evidence="1">Involved in chloramphenicol biosynthesis (PubMed:20713732). Catalyzes the beta-hydroxylation of 4-amino-L-phenylalanine (L-PAPA) covalently bound to CmlP to form L-p-aminophenylserine (PubMed:20713732).</text>
</comment>
<comment type="catalytic activity">
    <reaction evidence="1">
        <text>4-amino-L-phenylalanyl-[peptidyl-carrier protein] + AH2 + O2 = (2R)-2-(4-aminophenyl)-L-seryl-[peptidyl-carrier protein] + A + H2O</text>
        <dbReference type="Rhea" id="RHEA:22684"/>
        <dbReference type="Rhea" id="RHEA-COMP:15237"/>
        <dbReference type="Rhea" id="RHEA-COMP:15238"/>
        <dbReference type="ChEBI" id="CHEBI:13193"/>
        <dbReference type="ChEBI" id="CHEBI:15377"/>
        <dbReference type="ChEBI" id="CHEBI:15379"/>
        <dbReference type="ChEBI" id="CHEBI:17499"/>
        <dbReference type="ChEBI" id="CHEBI:142855"/>
        <dbReference type="ChEBI" id="CHEBI:142857"/>
        <dbReference type="EC" id="1.14.99.65"/>
    </reaction>
    <physiologicalReaction direction="left-to-right" evidence="1">
        <dbReference type="Rhea" id="RHEA:22685"/>
    </physiologicalReaction>
</comment>
<comment type="cofactor">
    <cofactor evidence="1 2 3">
        <name>Fe(2+)</name>
        <dbReference type="ChEBI" id="CHEBI:29033"/>
    </cofactor>
    <text evidence="2 3">Contains a dinuclear iron cluster that becomes oxo-bridged (Fe-O-Fe) during O(2) activation.</text>
</comment>
<comment type="pathway">
    <text evidence="1">Antibiotic biosynthesis.</text>
</comment>
<comment type="subunit">
    <text evidence="2">Homodimer.</text>
</comment>
<comment type="similarity">
    <text evidence="5">Belongs to the metallo-beta-lactamase superfamily.</text>
</comment>
<reference key="1">
    <citation type="journal article" date="2011" name="BMC Genomics">
        <title>Genome-wide analysis of the role of GlnR in Streptomyces venezuelae provides new insights into global nitrogen regulation in actinomycetes.</title>
        <authorList>
            <person name="Pullan S.T."/>
            <person name="Chandra G."/>
            <person name="Bibb M.J."/>
            <person name="Merrick M."/>
        </authorList>
    </citation>
    <scope>NUCLEOTIDE SEQUENCE [LARGE SCALE GENOMIC DNA]</scope>
    <source>
        <strain>ATCC 10712 / CBS 650.69 / DSM 40230 / JCM 4526 / NBRC 13096 / PD 04745</strain>
    </source>
</reference>
<reference key="2">
    <citation type="journal article" date="2010" name="Proc. Natl. Acad. Sci. U.S.A.">
        <title>A family of diiron monooxygenases catalyzing amino acid beta-hydroxylation in antibiotic biosynthesis.</title>
        <authorList>
            <person name="Makris T.M."/>
            <person name="Chakrabarti M."/>
            <person name="Muenck E."/>
            <person name="Lipscomb J.D."/>
        </authorList>
    </citation>
    <scope>FUNCTION</scope>
    <scope>CATALYTIC ACTIVITY</scope>
    <scope>COFACTOR</scope>
    <scope>PATHWAY</scope>
</reference>
<reference evidence="7" key="3">
    <citation type="journal article" date="2013" name="Biochemistry">
        <title>Structure of a dinuclear iron cluster-containing beta-hydroxylase active in antibiotic biosynthesis.</title>
        <authorList>
            <person name="Makris T.M."/>
            <person name="Knoot C.J."/>
            <person name="Wilmot C.M."/>
            <person name="Lipscomb J.D."/>
        </authorList>
    </citation>
    <scope>X-RAY CRYSTALLOGRAPHY (2.17 ANGSTROMS) IN COMPLEX WITH IRON</scope>
    <scope>COFACTOR</scope>
    <scope>SUBUNIT</scope>
    <scope>MUTAGENESIS OF GLU-430</scope>
</reference>
<reference evidence="8 9" key="4">
    <citation type="journal article" date="2016" name="Biochemistry">
        <title>A carboxylate shift regulates dioxygen activation by the diiron nonheme beta-hydroxylase CmlA upon binding of a substrate-loaded nonribosomal peptide synthetase.</title>
        <authorList>
            <person name="Jasniewski A.J."/>
            <person name="Knoot C.J."/>
            <person name="Lipscomb J.D."/>
            <person name="Que L."/>
        </authorList>
    </citation>
    <scope>X-RAY CRYSTALLOGRAPHY (2.20 ANGSTROMS) OF WILD-TYPE AND MUTANT ASP-377 IN COMPLEXES WITH IRON</scope>
    <scope>COFACTOR</scope>
    <scope>MUTAGENESIS OF GLU-377</scope>
</reference>
<sequence>MRYSLRQDIAVEPVIAGWYGWSYLLPPQTLARFVHNRFNRIVESYLDDPQVHAAAVRQRRMHGGPWIHAHEHRDAIEAWYRETAPRRERLDELFEAVRRLEEDILPRHHGECLDPVYQELPAALAGRVEVFYGRDNRTADYRFVEPLMYASEYYDESWQQVRFRPVTEDAREFALTTPMLEYGPEQLLVDVPLNSPLLDAVFRGGLTGTELDDLAARFGLDGERAARFASYFEPTPAASEAPAPASSSEEDVLEYVGHACVFARHRGTTFLVDPVLSYSGYPGGAENRFTFADLPERIDHLLITHNHQDHMLFETLLRIRHRVGRVLVPKSTNASLVDPGLGGILRRLGFTDVVEVDDLETLSCGSAEVVALPFLGEHGDLRIRSKTGWLIRFGERSVLFAADSTNISPTMYTKVAEVIGPVDTVFIGMESIGAAASWIYGPLYGEPLDRRTDQSRRLNGSNFPQAREIVDALEPDEVYVYAMGLEPWMGVVMAVDYDESHPAIVDSDLLVRHVQDKGGTAERLHLRRTLRL</sequence>
<keyword id="KW-0002">3D-structure</keyword>
<keyword id="KW-0045">Antibiotic biosynthesis</keyword>
<keyword id="KW-0408">Iron</keyword>
<keyword id="KW-0479">Metal-binding</keyword>
<keyword id="KW-0560">Oxidoreductase</keyword>
<keyword id="KW-1185">Reference proteome</keyword>
<name>CMLA_STRVP</name>
<evidence type="ECO:0000269" key="1">
    <source>
    </source>
</evidence>
<evidence type="ECO:0000269" key="2">
    <source>
    </source>
</evidence>
<evidence type="ECO:0000269" key="3">
    <source>
    </source>
</evidence>
<evidence type="ECO:0000303" key="4">
    <source>
    </source>
</evidence>
<evidence type="ECO:0000305" key="5"/>
<evidence type="ECO:0000312" key="6">
    <source>
        <dbReference type="EMBL" id="CCA54208.1"/>
    </source>
</evidence>
<evidence type="ECO:0007744" key="7">
    <source>
        <dbReference type="PDB" id="4JO0"/>
    </source>
</evidence>
<evidence type="ECO:0007744" key="8">
    <source>
        <dbReference type="PDB" id="5KIK"/>
    </source>
</evidence>
<evidence type="ECO:0007744" key="9">
    <source>
        <dbReference type="PDB" id="5KIL"/>
    </source>
</evidence>
<evidence type="ECO:0007829" key="10">
    <source>
        <dbReference type="PDB" id="4JO0"/>
    </source>
</evidence>
<evidence type="ECO:0007829" key="11">
    <source>
        <dbReference type="PDB" id="5KIL"/>
    </source>
</evidence>
<gene>
    <name evidence="4" type="primary">cmlA</name>
    <name evidence="6" type="ordered locus">SVEN_0921</name>
</gene>